<protein>
    <recommendedName>
        <fullName>Nucleoside diphosphate kinase, mitochondrial</fullName>
        <shortName>NDK</shortName>
        <shortName>NDP kinase, mitochondrial</shortName>
        <ecNumber>2.7.4.6</ecNumber>
    </recommendedName>
    <alternativeName>
        <fullName>Nucleoside diphosphate kinase D</fullName>
        <shortName>NDPKD</shortName>
    </alternativeName>
    <alternativeName>
        <fullName>nm23-M4</fullName>
    </alternativeName>
</protein>
<name>NDKM_MOUSE</name>
<proteinExistence type="evidence at protein level"/>
<accession>Q9WV84</accession>
<feature type="transit peptide" description="Mitochondrion" evidence="2">
    <location>
        <begin position="1"/>
        <end position="32"/>
    </location>
</feature>
<feature type="chain" id="PRO_0000019433" description="Nucleoside diphosphate kinase, mitochondrial">
    <location>
        <begin position="33"/>
        <end position="186"/>
    </location>
</feature>
<feature type="active site" description="Pros-phosphohistidine intermediate" evidence="1">
    <location>
        <position position="150"/>
    </location>
</feature>
<feature type="binding site" evidence="1">
    <location>
        <position position="44"/>
    </location>
    <ligand>
        <name>ATP</name>
        <dbReference type="ChEBI" id="CHEBI:30616"/>
    </ligand>
</feature>
<feature type="binding site" evidence="1">
    <location>
        <position position="92"/>
    </location>
    <ligand>
        <name>ATP</name>
        <dbReference type="ChEBI" id="CHEBI:30616"/>
    </ligand>
</feature>
<feature type="binding site" evidence="1">
    <location>
        <position position="120"/>
    </location>
    <ligand>
        <name>ATP</name>
        <dbReference type="ChEBI" id="CHEBI:30616"/>
    </ligand>
</feature>
<feature type="binding site" evidence="1">
    <location>
        <position position="126"/>
    </location>
    <ligand>
        <name>ATP</name>
        <dbReference type="ChEBI" id="CHEBI:30616"/>
    </ligand>
</feature>
<feature type="binding site" evidence="1">
    <location>
        <position position="137"/>
    </location>
    <ligand>
        <name>ATP</name>
        <dbReference type="ChEBI" id="CHEBI:30616"/>
    </ligand>
</feature>
<feature type="binding site" evidence="1">
    <location>
        <position position="147"/>
    </location>
    <ligand>
        <name>ATP</name>
        <dbReference type="ChEBI" id="CHEBI:30616"/>
    </ligand>
</feature>
<comment type="function">
    <text evidence="2">Major role in the synthesis of nucleoside triphosphates other than ATP. The ATP gamma phosphate is transferred to the NDP beta phosphate via a ping-pong mechanism, using a phosphorylated active-site intermediate. Through the catalyzed exchange of gamma-phosphate between di- and triphosphonucleosides participates in regulation of intracellular nucleotide homeostasis. Binds to anionic phospholipids, predominantly to cardiolipin; the binding inhibits its phosphotransfer activity. Acts as a mitochondria-specific NDK; its association with cardiolipin-containing mitochondrial inner membrane is coupled to respiration suggesting that ADP locally regenerated in the mitochondrion innermembrane space by its activity is directly taken up via ANT ADP/ATP translocase into the matrix space to stimulate respiratory ATP regeneration. Proposed to increase GTP-loading on dynamin-related GTPase OPA1 in mitochondria. In vitro can induce liposome cross-linking suggesting that it can cross-link inner and outer membranes to form contact sites, and promotes intermembrane migration of anionic phosphoplipids. Promotes the redistribution of cardiolipin between the mitochondrial inner membrane and outer membrane which is implicated in pro-apoptotic signaling (By similarity).</text>
</comment>
<comment type="catalytic activity">
    <reaction>
        <text>a 2'-deoxyribonucleoside 5'-diphosphate + ATP = a 2'-deoxyribonucleoside 5'-triphosphate + ADP</text>
        <dbReference type="Rhea" id="RHEA:44640"/>
        <dbReference type="ChEBI" id="CHEBI:30616"/>
        <dbReference type="ChEBI" id="CHEBI:61560"/>
        <dbReference type="ChEBI" id="CHEBI:73316"/>
        <dbReference type="ChEBI" id="CHEBI:456216"/>
        <dbReference type="EC" id="2.7.4.6"/>
    </reaction>
</comment>
<comment type="catalytic activity">
    <reaction>
        <text>a ribonucleoside 5'-diphosphate + ATP = a ribonucleoside 5'-triphosphate + ADP</text>
        <dbReference type="Rhea" id="RHEA:18113"/>
        <dbReference type="ChEBI" id="CHEBI:30616"/>
        <dbReference type="ChEBI" id="CHEBI:57930"/>
        <dbReference type="ChEBI" id="CHEBI:61557"/>
        <dbReference type="ChEBI" id="CHEBI:456216"/>
        <dbReference type="EC" id="2.7.4.6"/>
    </reaction>
</comment>
<comment type="cofactor">
    <cofactor evidence="1">
        <name>Mg(2+)</name>
        <dbReference type="ChEBI" id="CHEBI:18420"/>
    </cofactor>
</comment>
<comment type="subunit">
    <text evidence="2 3">Homohexamer (By similarity). Interacts with OPA1 (By similarity). Interacts with CAPN8 (PubMed:16476741).</text>
</comment>
<comment type="subcellular location">
    <subcellularLocation>
        <location evidence="2">Mitochondrion intermembrane space</location>
        <topology>Peripheral membrane protein</topology>
    </subcellularLocation>
    <subcellularLocation>
        <location evidence="2">Mitochondrion matrix</location>
    </subcellularLocation>
    <text evidence="2">Predominantly localized in the mitochondrion intermembrane space. Colocalizes with OPA1 in mitochondria (By similarity).</text>
</comment>
<comment type="tissue specificity">
    <text evidence="3">Expressed in the base region of the oxyntic and pyloric mucosae.</text>
</comment>
<comment type="similarity">
    <text evidence="4">Belongs to the NDK family.</text>
</comment>
<keyword id="KW-0067">ATP-binding</keyword>
<keyword id="KW-0418">Kinase</keyword>
<keyword id="KW-0446">Lipid-binding</keyword>
<keyword id="KW-0460">Magnesium</keyword>
<keyword id="KW-0472">Membrane</keyword>
<keyword id="KW-0479">Metal-binding</keyword>
<keyword id="KW-0496">Mitochondrion</keyword>
<keyword id="KW-0546">Nucleotide metabolism</keyword>
<keyword id="KW-0547">Nucleotide-binding</keyword>
<keyword id="KW-1185">Reference proteome</keyword>
<keyword id="KW-0808">Transferase</keyword>
<keyword id="KW-0809">Transit peptide</keyword>
<gene>
    <name type="primary">Nme4</name>
</gene>
<reference key="1">
    <citation type="submission" date="1999-05" db="EMBL/GenBank/DDBJ databases">
        <authorList>
            <person name="Mehus J.G."/>
            <person name="Lambeth D.O."/>
        </authorList>
    </citation>
    <scope>NUCLEOTIDE SEQUENCE [MRNA]</scope>
</reference>
<reference key="2">
    <citation type="journal article" date="2002" name="Gene">
        <title>Characterization of the nm23-M2, nm23-M3 and nm23-M4 mouse genes: comparison with their human orthologs.</title>
        <authorList>
            <person name="Masse K."/>
            <person name="Dabernat S."/>
            <person name="Bourbon P.-M."/>
            <person name="Larou M."/>
            <person name="Amrein L."/>
            <person name="Barraud P."/>
            <person name="Perel Y."/>
            <person name="Camara M."/>
            <person name="Landry M."/>
            <person name="Lacombe M.L."/>
            <person name="Daniel J.-Y."/>
        </authorList>
    </citation>
    <scope>NUCLEOTIDE SEQUENCE [GENOMIC DNA / MRNA]</scope>
</reference>
<reference key="3">
    <citation type="journal article" date="2004" name="Genome Res.">
        <title>The status, quality, and expansion of the NIH full-length cDNA project: the Mammalian Gene Collection (MGC).</title>
        <authorList>
            <consortium name="The MGC Project Team"/>
        </authorList>
    </citation>
    <scope>NUCLEOTIDE SEQUENCE [LARGE SCALE MRNA]</scope>
    <source>
        <strain>Czech II</strain>
        <tissue>Mammary gland</tissue>
    </source>
</reference>
<reference key="4">
    <citation type="journal article" date="2006" name="J. Biol. Chem.">
        <title>Stomach-specific calpain, nCL-2, localizes in mucus cells and proteolyzes the beta-subunit of coatomer complex, beta-COP.</title>
        <authorList>
            <person name="Hata S."/>
            <person name="Koyama S."/>
            <person name="Kawahara H."/>
            <person name="Doi N."/>
            <person name="Maeda T."/>
            <person name="Toyama-Sorimachi N."/>
            <person name="Abe K."/>
            <person name="Suzuki K."/>
            <person name="Sorimachi H."/>
        </authorList>
    </citation>
    <scope>INTERACTION WITH CAPN8</scope>
    <scope>TISSUE SPECIFICITY</scope>
</reference>
<reference key="5">
    <citation type="journal article" date="2010" name="Cell">
        <title>A tissue-specific atlas of mouse protein phosphorylation and expression.</title>
        <authorList>
            <person name="Huttlin E.L."/>
            <person name="Jedrychowski M.P."/>
            <person name="Elias J.E."/>
            <person name="Goswami T."/>
            <person name="Rad R."/>
            <person name="Beausoleil S.A."/>
            <person name="Villen J."/>
            <person name="Haas W."/>
            <person name="Sowa M.E."/>
            <person name="Gygi S.P."/>
        </authorList>
    </citation>
    <scope>IDENTIFICATION BY MASS SPECTROMETRY [LARGE SCALE ANALYSIS]</scope>
    <source>
        <tissue>Testis</tissue>
    </source>
</reference>
<organism>
    <name type="scientific">Mus musculus</name>
    <name type="common">Mouse</name>
    <dbReference type="NCBI Taxonomy" id="10090"/>
    <lineage>
        <taxon>Eukaryota</taxon>
        <taxon>Metazoa</taxon>
        <taxon>Chordata</taxon>
        <taxon>Craniata</taxon>
        <taxon>Vertebrata</taxon>
        <taxon>Euteleostomi</taxon>
        <taxon>Mammalia</taxon>
        <taxon>Eutheria</taxon>
        <taxon>Euarchontoglires</taxon>
        <taxon>Glires</taxon>
        <taxon>Rodentia</taxon>
        <taxon>Myomorpha</taxon>
        <taxon>Muroidea</taxon>
        <taxon>Muridae</taxon>
        <taxon>Murinae</taxon>
        <taxon>Mus</taxon>
        <taxon>Mus</taxon>
    </lineage>
</organism>
<evidence type="ECO:0000250" key="1"/>
<evidence type="ECO:0000250" key="2">
    <source>
        <dbReference type="UniProtKB" id="O00746"/>
    </source>
</evidence>
<evidence type="ECO:0000269" key="3">
    <source>
    </source>
</evidence>
<evidence type="ECO:0000305" key="4"/>
<dbReference type="EC" id="2.7.4.6"/>
<dbReference type="EMBL" id="AF153451">
    <property type="protein sequence ID" value="AAD38977.1"/>
    <property type="molecule type" value="mRNA"/>
</dbReference>
<dbReference type="EMBL" id="AF288690">
    <property type="protein sequence ID" value="AAG02200.1"/>
    <property type="molecule type" value="mRNA"/>
</dbReference>
<dbReference type="EMBL" id="AF288692">
    <property type="protein sequence ID" value="AAG02202.1"/>
    <property type="molecule type" value="Genomic_DNA"/>
</dbReference>
<dbReference type="EMBL" id="BC027277">
    <property type="protein sequence ID" value="AAH27277.1"/>
    <property type="molecule type" value="mRNA"/>
</dbReference>
<dbReference type="CCDS" id="CCDS28544.1"/>
<dbReference type="RefSeq" id="NP_062705.1">
    <property type="nucleotide sequence ID" value="NM_019731.1"/>
</dbReference>
<dbReference type="SMR" id="Q9WV84"/>
<dbReference type="BioGRID" id="208032">
    <property type="interactions" value="2"/>
</dbReference>
<dbReference type="FunCoup" id="Q9WV84">
    <property type="interactions" value="437"/>
</dbReference>
<dbReference type="STRING" id="10090.ENSMUSP00000025007"/>
<dbReference type="GlyGen" id="Q9WV84">
    <property type="glycosylation" value="1 site, 1 O-linked glycan (1 site)"/>
</dbReference>
<dbReference type="PhosphoSitePlus" id="Q9WV84"/>
<dbReference type="PaxDb" id="10090-ENSMUSP00000025007"/>
<dbReference type="ProteomicsDB" id="252820"/>
<dbReference type="Pumba" id="Q9WV84"/>
<dbReference type="Antibodypedia" id="34896">
    <property type="antibodies" value="412 antibodies from 26 providers"/>
</dbReference>
<dbReference type="DNASU" id="56520"/>
<dbReference type="Ensembl" id="ENSMUST00000025007.7">
    <property type="protein sequence ID" value="ENSMUSP00000025007.6"/>
    <property type="gene ID" value="ENSMUSG00000024177.10"/>
</dbReference>
<dbReference type="GeneID" id="56520"/>
<dbReference type="KEGG" id="mmu:56520"/>
<dbReference type="UCSC" id="uc008bdh.1">
    <property type="organism name" value="mouse"/>
</dbReference>
<dbReference type="AGR" id="MGI:1931148"/>
<dbReference type="CTD" id="4833"/>
<dbReference type="MGI" id="MGI:1931148">
    <property type="gene designation" value="Nme4"/>
</dbReference>
<dbReference type="VEuPathDB" id="HostDB:ENSMUSG00000024177"/>
<dbReference type="eggNOG" id="KOG0888">
    <property type="taxonomic scope" value="Eukaryota"/>
</dbReference>
<dbReference type="GeneTree" id="ENSGT00940000160286"/>
<dbReference type="HOGENOM" id="CLU_060216_6_0_1"/>
<dbReference type="InParanoid" id="Q9WV84"/>
<dbReference type="PhylomeDB" id="Q9WV84"/>
<dbReference type="TreeFam" id="TF106373"/>
<dbReference type="BRENDA" id="2.7.4.6">
    <property type="organism ID" value="3474"/>
</dbReference>
<dbReference type="Reactome" id="R-MMU-499943">
    <property type="pathway name" value="Interconversion of nucleotide di- and triphosphates"/>
</dbReference>
<dbReference type="BioGRID-ORCS" id="56520">
    <property type="hits" value="2 hits in 80 CRISPR screens"/>
</dbReference>
<dbReference type="PRO" id="PR:Q9WV84"/>
<dbReference type="Proteomes" id="UP000000589">
    <property type="component" value="Chromosome 17"/>
</dbReference>
<dbReference type="RNAct" id="Q9WV84">
    <property type="molecule type" value="protein"/>
</dbReference>
<dbReference type="Bgee" id="ENSMUSG00000024177">
    <property type="expression patterns" value="Expressed in epiblast cell in embryo and 165 other cell types or tissues"/>
</dbReference>
<dbReference type="ExpressionAtlas" id="Q9WV84">
    <property type="expression patterns" value="baseline and differential"/>
</dbReference>
<dbReference type="GO" id="GO:0016020">
    <property type="term" value="C:membrane"/>
    <property type="evidence" value="ECO:0007669"/>
    <property type="project" value="UniProtKB-KW"/>
</dbReference>
<dbReference type="GO" id="GO:0005758">
    <property type="term" value="C:mitochondrial intermembrane space"/>
    <property type="evidence" value="ECO:0007669"/>
    <property type="project" value="UniProtKB-SubCell"/>
</dbReference>
<dbReference type="GO" id="GO:0005759">
    <property type="term" value="C:mitochondrial matrix"/>
    <property type="evidence" value="ECO:0007669"/>
    <property type="project" value="UniProtKB-SubCell"/>
</dbReference>
<dbReference type="GO" id="GO:0005739">
    <property type="term" value="C:mitochondrion"/>
    <property type="evidence" value="ECO:0007005"/>
    <property type="project" value="MGI"/>
</dbReference>
<dbReference type="GO" id="GO:0005524">
    <property type="term" value="F:ATP binding"/>
    <property type="evidence" value="ECO:0007669"/>
    <property type="project" value="UniProtKB-KW"/>
</dbReference>
<dbReference type="GO" id="GO:1901612">
    <property type="term" value="F:cardiolipin binding"/>
    <property type="evidence" value="ECO:0007669"/>
    <property type="project" value="Ensembl"/>
</dbReference>
<dbReference type="GO" id="GO:0051020">
    <property type="term" value="F:GTPase binding"/>
    <property type="evidence" value="ECO:0007669"/>
    <property type="project" value="Ensembl"/>
</dbReference>
<dbReference type="GO" id="GO:0046872">
    <property type="term" value="F:metal ion binding"/>
    <property type="evidence" value="ECO:0007669"/>
    <property type="project" value="UniProtKB-KW"/>
</dbReference>
<dbReference type="GO" id="GO:0004550">
    <property type="term" value="F:nucleoside diphosphate kinase activity"/>
    <property type="evidence" value="ECO:0007669"/>
    <property type="project" value="UniProtKB-EC"/>
</dbReference>
<dbReference type="GO" id="GO:0044877">
    <property type="term" value="F:protein-containing complex binding"/>
    <property type="evidence" value="ECO:0007669"/>
    <property type="project" value="Ensembl"/>
</dbReference>
<dbReference type="GO" id="GO:0006241">
    <property type="term" value="P:CTP biosynthetic process"/>
    <property type="evidence" value="ECO:0007669"/>
    <property type="project" value="InterPro"/>
</dbReference>
<dbReference type="GO" id="GO:0006183">
    <property type="term" value="P:GTP biosynthetic process"/>
    <property type="evidence" value="ECO:0007669"/>
    <property type="project" value="InterPro"/>
</dbReference>
<dbReference type="GO" id="GO:0006869">
    <property type="term" value="P:lipid transport"/>
    <property type="evidence" value="ECO:0007669"/>
    <property type="project" value="Ensembl"/>
</dbReference>
<dbReference type="GO" id="GO:0006228">
    <property type="term" value="P:UTP biosynthetic process"/>
    <property type="evidence" value="ECO:0007669"/>
    <property type="project" value="InterPro"/>
</dbReference>
<dbReference type="CDD" id="cd04413">
    <property type="entry name" value="NDPk_I"/>
    <property type="match status" value="1"/>
</dbReference>
<dbReference type="FunFam" id="3.30.70.141:FF:000017">
    <property type="entry name" value="Nucleoside diphosphate kinase"/>
    <property type="match status" value="1"/>
</dbReference>
<dbReference type="Gene3D" id="3.30.70.141">
    <property type="entry name" value="Nucleoside diphosphate kinase-like domain"/>
    <property type="match status" value="1"/>
</dbReference>
<dbReference type="HAMAP" id="MF_00451">
    <property type="entry name" value="NDP_kinase"/>
    <property type="match status" value="1"/>
</dbReference>
<dbReference type="InterPro" id="IPR034907">
    <property type="entry name" value="NDK-like_dom"/>
</dbReference>
<dbReference type="InterPro" id="IPR036850">
    <property type="entry name" value="NDK-like_dom_sf"/>
</dbReference>
<dbReference type="InterPro" id="IPR001564">
    <property type="entry name" value="Nucleoside_diP_kinase"/>
</dbReference>
<dbReference type="InterPro" id="IPR023005">
    <property type="entry name" value="Nucleoside_diP_kinase_AS"/>
</dbReference>
<dbReference type="NCBIfam" id="NF001908">
    <property type="entry name" value="PRK00668.1"/>
    <property type="match status" value="1"/>
</dbReference>
<dbReference type="PANTHER" id="PTHR11349">
    <property type="entry name" value="NUCLEOSIDE DIPHOSPHATE KINASE"/>
    <property type="match status" value="1"/>
</dbReference>
<dbReference type="Pfam" id="PF00334">
    <property type="entry name" value="NDK"/>
    <property type="match status" value="1"/>
</dbReference>
<dbReference type="PRINTS" id="PR01243">
    <property type="entry name" value="NUCDPKINASE"/>
</dbReference>
<dbReference type="SMART" id="SM00562">
    <property type="entry name" value="NDK"/>
    <property type="match status" value="1"/>
</dbReference>
<dbReference type="SUPFAM" id="SSF54919">
    <property type="entry name" value="Nucleoside diphosphate kinase, NDK"/>
    <property type="match status" value="1"/>
</dbReference>
<dbReference type="PROSITE" id="PS00469">
    <property type="entry name" value="NDPK"/>
    <property type="match status" value="1"/>
</dbReference>
<dbReference type="PROSITE" id="PS51374">
    <property type="entry name" value="NDPK_LIKE"/>
    <property type="match status" value="1"/>
</dbReference>
<sequence>MGSLFGRVAALRALLCGPRFQCLLVRPSSGGPPWPQERTLVAVKPDGVQRRLVGTVIQRFERRGFKLVGMKMLQAPESILAEHYRDLQRKPFYPALISYMSSGPVVAMVWEGPNVVHISRAMIGHTDSTEAAPGTIRGDFSVHISRNVIHASDSVDGAQREIELWFQSSELLNWADGGHHSSCYPA</sequence>